<gene>
    <name evidence="1" type="primary">tatA</name>
    <name type="ordered locus">Synpcc7942_0226</name>
</gene>
<protein>
    <recommendedName>
        <fullName evidence="1">Sec-independent protein translocase protein TatA</fullName>
    </recommendedName>
</protein>
<keyword id="KW-0997">Cell inner membrane</keyword>
<keyword id="KW-1003">Cell membrane</keyword>
<keyword id="KW-0472">Membrane</keyword>
<keyword id="KW-0653">Protein transport</keyword>
<keyword id="KW-1185">Reference proteome</keyword>
<keyword id="KW-0811">Translocation</keyword>
<keyword id="KW-0812">Transmembrane</keyword>
<keyword id="KW-1133">Transmembrane helix</keyword>
<keyword id="KW-0813">Transport</keyword>
<evidence type="ECO:0000255" key="1">
    <source>
        <dbReference type="HAMAP-Rule" id="MF_00236"/>
    </source>
</evidence>
<evidence type="ECO:0000256" key="2">
    <source>
        <dbReference type="SAM" id="MobiDB-lite"/>
    </source>
</evidence>
<sequence length="91" mass="9908">MNFFGIGLPEMLVILAIALLVFGPKKLPEIGRSLGKALRGFQDASREFESEIKREIDRTPATPAEATVEPPVLDSAPTEAVTVEKQTETQV</sequence>
<proteinExistence type="inferred from homology"/>
<accession>Q31RR1</accession>
<name>TATA_SYNE7</name>
<feature type="chain" id="PRO_0000336646" description="Sec-independent protein translocase protein TatA">
    <location>
        <begin position="1"/>
        <end position="91"/>
    </location>
</feature>
<feature type="transmembrane region" description="Helical" evidence="1">
    <location>
        <begin position="3"/>
        <end position="23"/>
    </location>
</feature>
<feature type="region of interest" description="Disordered" evidence="2">
    <location>
        <begin position="57"/>
        <end position="91"/>
    </location>
</feature>
<feature type="compositionally biased region" description="Low complexity" evidence="2">
    <location>
        <begin position="59"/>
        <end position="72"/>
    </location>
</feature>
<dbReference type="EMBL" id="CP000100">
    <property type="protein sequence ID" value="ABB56258.1"/>
    <property type="molecule type" value="Genomic_DNA"/>
</dbReference>
<dbReference type="RefSeq" id="WP_011243599.1">
    <property type="nucleotide sequence ID" value="NZ_JACJTX010000002.1"/>
</dbReference>
<dbReference type="STRING" id="1140.Synpcc7942_0226"/>
<dbReference type="PaxDb" id="1140-Synpcc7942_0226"/>
<dbReference type="KEGG" id="syf:Synpcc7942_0226"/>
<dbReference type="eggNOG" id="COG1826">
    <property type="taxonomic scope" value="Bacteria"/>
</dbReference>
<dbReference type="HOGENOM" id="CLU_086034_1_5_3"/>
<dbReference type="OrthoDB" id="9800908at2"/>
<dbReference type="BioCyc" id="SYNEL:SYNPCC7942_0226-MONOMER"/>
<dbReference type="Proteomes" id="UP000889800">
    <property type="component" value="Chromosome"/>
</dbReference>
<dbReference type="GO" id="GO:0033281">
    <property type="term" value="C:TAT protein transport complex"/>
    <property type="evidence" value="ECO:0007669"/>
    <property type="project" value="UniProtKB-UniRule"/>
</dbReference>
<dbReference type="GO" id="GO:0008320">
    <property type="term" value="F:protein transmembrane transporter activity"/>
    <property type="evidence" value="ECO:0007669"/>
    <property type="project" value="UniProtKB-UniRule"/>
</dbReference>
<dbReference type="GO" id="GO:0043953">
    <property type="term" value="P:protein transport by the Tat complex"/>
    <property type="evidence" value="ECO:0007669"/>
    <property type="project" value="UniProtKB-UniRule"/>
</dbReference>
<dbReference type="Gene3D" id="1.20.5.3310">
    <property type="match status" value="1"/>
</dbReference>
<dbReference type="HAMAP" id="MF_00236">
    <property type="entry name" value="TatA_E"/>
    <property type="match status" value="1"/>
</dbReference>
<dbReference type="InterPro" id="IPR003369">
    <property type="entry name" value="TatA/B/E"/>
</dbReference>
<dbReference type="InterPro" id="IPR006312">
    <property type="entry name" value="TatA/E"/>
</dbReference>
<dbReference type="NCBIfam" id="NF011429">
    <property type="entry name" value="PRK14857.1"/>
    <property type="match status" value="1"/>
</dbReference>
<dbReference type="NCBIfam" id="NF011430">
    <property type="entry name" value="PRK14861.1"/>
    <property type="match status" value="1"/>
</dbReference>
<dbReference type="NCBIfam" id="TIGR01411">
    <property type="entry name" value="tatAE"/>
    <property type="match status" value="1"/>
</dbReference>
<dbReference type="PANTHER" id="PTHR33162">
    <property type="entry name" value="SEC-INDEPENDENT PROTEIN TRANSLOCASE PROTEIN TATA, CHLOROPLASTIC"/>
    <property type="match status" value="1"/>
</dbReference>
<dbReference type="PANTHER" id="PTHR33162:SF1">
    <property type="entry name" value="SEC-INDEPENDENT PROTEIN TRANSLOCASE PROTEIN TATA, CHLOROPLASTIC"/>
    <property type="match status" value="1"/>
</dbReference>
<dbReference type="Pfam" id="PF02416">
    <property type="entry name" value="TatA_B_E"/>
    <property type="match status" value="1"/>
</dbReference>
<dbReference type="PRINTS" id="PR01506">
    <property type="entry name" value="TATBPROTEIN"/>
</dbReference>
<organism>
    <name type="scientific">Synechococcus elongatus (strain ATCC 33912 / PCC 7942 / FACHB-805)</name>
    <name type="common">Anacystis nidulans R2</name>
    <dbReference type="NCBI Taxonomy" id="1140"/>
    <lineage>
        <taxon>Bacteria</taxon>
        <taxon>Bacillati</taxon>
        <taxon>Cyanobacteriota</taxon>
        <taxon>Cyanophyceae</taxon>
        <taxon>Synechococcales</taxon>
        <taxon>Synechococcaceae</taxon>
        <taxon>Synechococcus</taxon>
    </lineage>
</organism>
<comment type="function">
    <text evidence="1">Part of the twin-arginine translocation (Tat) system that transports large folded proteins containing a characteristic twin-arginine motif in their signal peptide across membranes. TatA could form the protein-conducting channel of the Tat system.</text>
</comment>
<comment type="subunit">
    <text evidence="1">Forms a complex with TatC.</text>
</comment>
<comment type="subcellular location">
    <subcellularLocation>
        <location evidence="1">Cell inner membrane</location>
        <topology evidence="1">Single-pass membrane protein</topology>
    </subcellularLocation>
</comment>
<comment type="similarity">
    <text evidence="1">Belongs to the TatA/E family.</text>
</comment>
<reference key="1">
    <citation type="submission" date="2005-08" db="EMBL/GenBank/DDBJ databases">
        <title>Complete sequence of chromosome 1 of Synechococcus elongatus PCC 7942.</title>
        <authorList>
            <consortium name="US DOE Joint Genome Institute"/>
            <person name="Copeland A."/>
            <person name="Lucas S."/>
            <person name="Lapidus A."/>
            <person name="Barry K."/>
            <person name="Detter J.C."/>
            <person name="Glavina T."/>
            <person name="Hammon N."/>
            <person name="Israni S."/>
            <person name="Pitluck S."/>
            <person name="Schmutz J."/>
            <person name="Larimer F."/>
            <person name="Land M."/>
            <person name="Kyrpides N."/>
            <person name="Lykidis A."/>
            <person name="Golden S."/>
            <person name="Richardson P."/>
        </authorList>
    </citation>
    <scope>NUCLEOTIDE SEQUENCE [LARGE SCALE GENOMIC DNA]</scope>
    <source>
        <strain>ATCC 33912 / PCC 7942 / FACHB-805</strain>
    </source>
</reference>